<gene>
    <name type="ordered locus">lmo1921</name>
</gene>
<proteinExistence type="inferred from homology"/>
<organism>
    <name type="scientific">Listeria monocytogenes serovar 1/2a (strain ATCC BAA-679 / EGD-e)</name>
    <dbReference type="NCBI Taxonomy" id="169963"/>
    <lineage>
        <taxon>Bacteria</taxon>
        <taxon>Bacillati</taxon>
        <taxon>Bacillota</taxon>
        <taxon>Bacilli</taxon>
        <taxon>Bacillales</taxon>
        <taxon>Listeriaceae</taxon>
        <taxon>Listeria</taxon>
    </lineage>
</organism>
<feature type="chain" id="PRO_0000216102" description="UPF0302 protein lmo1921">
    <location>
        <begin position="1"/>
        <end position="181"/>
    </location>
</feature>
<sequence length="181" mass="21211">MKASISIDEKKDFIRWFLNKHQMKTREAMWVLNYIAGHDQIVKYVHFVDNLEGCARGLSLSAHGVESEPFLFFKGNIMTTDPEKAFHDIRLNWDEELYVELHFEEAMSSPEYALVREDNPFAAVKLADEEKEMADALIYQSVHQFSREKVLQQIDEALDTRDEAAFHKLVRILQQMDTEKE</sequence>
<protein>
    <recommendedName>
        <fullName evidence="1">UPF0302 protein lmo1921</fullName>
    </recommendedName>
</protein>
<comment type="similarity">
    <text evidence="1">Belongs to the UPF0302 family.</text>
</comment>
<reference key="1">
    <citation type="journal article" date="2001" name="Science">
        <title>Comparative genomics of Listeria species.</title>
        <authorList>
            <person name="Glaser P."/>
            <person name="Frangeul L."/>
            <person name="Buchrieser C."/>
            <person name="Rusniok C."/>
            <person name="Amend A."/>
            <person name="Baquero F."/>
            <person name="Berche P."/>
            <person name="Bloecker H."/>
            <person name="Brandt P."/>
            <person name="Chakraborty T."/>
            <person name="Charbit A."/>
            <person name="Chetouani F."/>
            <person name="Couve E."/>
            <person name="de Daruvar A."/>
            <person name="Dehoux P."/>
            <person name="Domann E."/>
            <person name="Dominguez-Bernal G."/>
            <person name="Duchaud E."/>
            <person name="Durant L."/>
            <person name="Dussurget O."/>
            <person name="Entian K.-D."/>
            <person name="Fsihi H."/>
            <person name="Garcia-del Portillo F."/>
            <person name="Garrido P."/>
            <person name="Gautier L."/>
            <person name="Goebel W."/>
            <person name="Gomez-Lopez N."/>
            <person name="Hain T."/>
            <person name="Hauf J."/>
            <person name="Jackson D."/>
            <person name="Jones L.-M."/>
            <person name="Kaerst U."/>
            <person name="Kreft J."/>
            <person name="Kuhn M."/>
            <person name="Kunst F."/>
            <person name="Kurapkat G."/>
            <person name="Madueno E."/>
            <person name="Maitournam A."/>
            <person name="Mata Vicente J."/>
            <person name="Ng E."/>
            <person name="Nedjari H."/>
            <person name="Nordsiek G."/>
            <person name="Novella S."/>
            <person name="de Pablos B."/>
            <person name="Perez-Diaz J.-C."/>
            <person name="Purcell R."/>
            <person name="Remmel B."/>
            <person name="Rose M."/>
            <person name="Schlueter T."/>
            <person name="Simoes N."/>
            <person name="Tierrez A."/>
            <person name="Vazquez-Boland J.-A."/>
            <person name="Voss H."/>
            <person name="Wehland J."/>
            <person name="Cossart P."/>
        </authorList>
    </citation>
    <scope>NUCLEOTIDE SEQUENCE [LARGE SCALE GENOMIC DNA]</scope>
    <source>
        <strain>ATCC BAA-679 / EGD-e</strain>
    </source>
</reference>
<accession>Q8Y5Y2</accession>
<evidence type="ECO:0000255" key="1">
    <source>
        <dbReference type="HAMAP-Rule" id="MF_00760"/>
    </source>
</evidence>
<name>Y1921_LISMO</name>
<dbReference type="EMBL" id="AL591981">
    <property type="protein sequence ID" value="CAC99999.1"/>
    <property type="molecule type" value="Genomic_DNA"/>
</dbReference>
<dbReference type="PIR" id="AI1314">
    <property type="entry name" value="AI1314"/>
</dbReference>
<dbReference type="RefSeq" id="NP_465445.1">
    <property type="nucleotide sequence ID" value="NC_003210.1"/>
</dbReference>
<dbReference type="SMR" id="Q8Y5Y2"/>
<dbReference type="STRING" id="169963.gene:17594606"/>
<dbReference type="PaxDb" id="169963-lmo1921"/>
<dbReference type="EnsemblBacteria" id="CAC99999">
    <property type="protein sequence ID" value="CAC99999"/>
    <property type="gene ID" value="CAC99999"/>
</dbReference>
<dbReference type="GeneID" id="985800"/>
<dbReference type="KEGG" id="lmo:lmo1921"/>
<dbReference type="PATRIC" id="fig|169963.11.peg.1967"/>
<dbReference type="eggNOG" id="COG5582">
    <property type="taxonomic scope" value="Bacteria"/>
</dbReference>
<dbReference type="HOGENOM" id="CLU_126019_0_0_9"/>
<dbReference type="OrthoDB" id="2155814at2"/>
<dbReference type="PhylomeDB" id="Q8Y5Y2"/>
<dbReference type="BioCyc" id="LMON169963:LMO1921-MONOMER"/>
<dbReference type="Proteomes" id="UP000000817">
    <property type="component" value="Chromosome"/>
</dbReference>
<dbReference type="Gene3D" id="3.40.1530.30">
    <property type="entry name" value="Uncharacterised family UPF0302, N-terminal domain"/>
    <property type="match status" value="1"/>
</dbReference>
<dbReference type="Gene3D" id="4.10.810.10">
    <property type="entry name" value="Virus Scaffolding Protein, Chain A"/>
    <property type="match status" value="1"/>
</dbReference>
<dbReference type="HAMAP" id="MF_00760">
    <property type="entry name" value="UPF0302"/>
    <property type="match status" value="1"/>
</dbReference>
<dbReference type="InterPro" id="IPR014957">
    <property type="entry name" value="IDEAL_dom"/>
</dbReference>
<dbReference type="InterPro" id="IPR011188">
    <property type="entry name" value="UPF0302"/>
</dbReference>
<dbReference type="InterPro" id="IPR014963">
    <property type="entry name" value="UPF0302_N"/>
</dbReference>
<dbReference type="InterPro" id="IPR038091">
    <property type="entry name" value="UPF0302_N_sf"/>
</dbReference>
<dbReference type="InterPro" id="IPR027393">
    <property type="entry name" value="Virus_scaffolding_prot_C"/>
</dbReference>
<dbReference type="NCBIfam" id="NF002965">
    <property type="entry name" value="PRK03636.1"/>
    <property type="match status" value="1"/>
</dbReference>
<dbReference type="Pfam" id="PF08858">
    <property type="entry name" value="IDEAL"/>
    <property type="match status" value="1"/>
</dbReference>
<dbReference type="Pfam" id="PF08864">
    <property type="entry name" value="UPF0302"/>
    <property type="match status" value="1"/>
</dbReference>
<dbReference type="PIRSF" id="PIRSF007165">
    <property type="entry name" value="UCP007165"/>
    <property type="match status" value="1"/>
</dbReference>
<dbReference type="SMART" id="SM00914">
    <property type="entry name" value="IDEAL"/>
    <property type="match status" value="1"/>
</dbReference>
<keyword id="KW-1185">Reference proteome</keyword>